<accession>Q4R7H3</accession>
<gene>
    <name evidence="3" type="primary">SPDL1</name>
    <name evidence="3" type="synonym">CCDC99</name>
    <name type="ORF">QtsA-15340</name>
</gene>
<protein>
    <recommendedName>
        <fullName evidence="3">Protein Spindly</fullName>
    </recommendedName>
    <alternativeName>
        <fullName evidence="3">Coiled-coil domain-containing protein 99</fullName>
    </alternativeName>
    <alternativeName>
        <fullName evidence="3">Spindle apparatus coiled-coil domain-containing protein 1</fullName>
    </alternativeName>
</protein>
<name>SPDLY_MACFA</name>
<keyword id="KW-0007">Acetylation</keyword>
<keyword id="KW-0131">Cell cycle</keyword>
<keyword id="KW-0132">Cell division</keyword>
<keyword id="KW-0137">Centromere</keyword>
<keyword id="KW-0158">Chromosome</keyword>
<keyword id="KW-0175">Coiled coil</keyword>
<keyword id="KW-0963">Cytoplasm</keyword>
<keyword id="KW-0206">Cytoskeleton</keyword>
<keyword id="KW-0995">Kinetochore</keyword>
<keyword id="KW-0498">Mitosis</keyword>
<keyword id="KW-0539">Nucleus</keyword>
<keyword id="KW-0597">Phosphoprotein</keyword>
<keyword id="KW-1185">Reference proteome</keyword>
<keyword id="KW-0832">Ubl conjugation</keyword>
<feature type="chain" id="PRO_0000274517" description="Protein Spindly">
    <location>
        <begin position="1"/>
        <end position="605"/>
    </location>
</feature>
<feature type="region of interest" description="Disordered" evidence="4">
    <location>
        <begin position="545"/>
        <end position="581"/>
    </location>
</feature>
<feature type="coiled-coil region" evidence="3">
    <location>
        <begin position="3"/>
        <end position="442"/>
    </location>
</feature>
<feature type="compositionally biased region" description="Basic and acidic residues" evidence="4">
    <location>
        <begin position="564"/>
        <end position="581"/>
    </location>
</feature>
<feature type="modified residue" description="N-acetylmethionine" evidence="2">
    <location>
        <position position="1"/>
    </location>
</feature>
<feature type="modified residue" description="Phosphoserine" evidence="2">
    <location>
        <position position="513"/>
    </location>
</feature>
<feature type="modified residue" description="Phosphoserine" evidence="2">
    <location>
        <position position="515"/>
    </location>
</feature>
<feature type="modified residue" description="Phosphoserine" evidence="1">
    <location>
        <position position="555"/>
    </location>
</feature>
<comment type="function">
    <text evidence="2 3">Required for the localization of dynein and dynactin to the mitotic kintochore. Dynein is believed to control the initial lateral interaction between the kinetochore and spindle microtubules and to facilitate the subsequent formation of end-on kinetochore-microtubule attachments mediated by the NDC80 complex. Also required for correct spindle orientation. Does not appear to be required for the removal of spindle assembly checkpoint (SAC) proteins from the kinetochore upon bipolar spindle attachment. Acts as an adapter protein linking the dynein motor complex to various cargos and converts dynein from a non-processive to a highly processive motor in the presence of dynactin. Facilitates the interaction between dynein and dynactin and activates dynein processivity (the ability to move along a microtubule for a long distance without falling off the track) (By similarity). Plays a role in cell migration (By similarity).</text>
</comment>
<comment type="subunit">
    <text evidence="2 3">Interacts with KNTC1 and ZW10. These interactions appear weak and may be transient or indirect. Interacts with dynein intermediate chain and dynactin (DCTN1) (By similarity). Interacts with the catalytically active form of USP45 (By similarity).</text>
</comment>
<comment type="subcellular location">
    <subcellularLocation>
        <location evidence="3">Cytoplasm</location>
        <location evidence="3">Cytoskeleton</location>
        <location evidence="3">Microtubule organizing center</location>
        <location evidence="3">Centrosome</location>
    </subcellularLocation>
    <subcellularLocation>
        <location evidence="3">Chromosome</location>
        <location evidence="3">Centromere</location>
        <location evidence="3">Kinetochore</location>
    </subcellularLocation>
    <subcellularLocation>
        <location evidence="3">Nucleus</location>
    </subcellularLocation>
    <subcellularLocation>
        <location evidence="3">Cytoplasm</location>
        <location evidence="3">Cytoskeleton</location>
        <location evidence="3">Spindle pole</location>
    </subcellularLocation>
    <text evidence="3">Localizes to the nucleus in interphase and to the kinetochore in early prometaphase. Relocalizes to the mitotic spindle pole before metaphase and is subsequently lost from the spindle poles after chromosome congression is completed. Removal of this protein from the kinetochore requires the dynein/dynactin complex.</text>
</comment>
<comment type="PTM">
    <text evidence="2">Monoubiquitinated with'Lys-48' linkage (By similarity). Deubiquitinated by USP45 (By similarity).</text>
</comment>
<comment type="similarity">
    <text evidence="3">Belongs to the Spindly family.</text>
</comment>
<reference key="1">
    <citation type="submission" date="2005-06" db="EMBL/GenBank/DDBJ databases">
        <title>DNA sequences of macaque genes expressed in brain or testis and its evolutionary implications.</title>
        <authorList>
            <consortium name="International consortium for macaque cDNA sequencing and analysis"/>
        </authorList>
    </citation>
    <scope>NUCLEOTIDE SEQUENCE [LARGE SCALE MRNA]</scope>
    <source>
        <tissue>Testis</tissue>
    </source>
</reference>
<proteinExistence type="evidence at transcript level"/>
<sequence>METDIVINLRCKLKEAEEERLKAAQYGLQLVESQNELQNQLDKCRNEMMTMTESYEQEKYTLQREVELKSRMLESLSCECEAIKQQQKMHLEKLEEQLSRSHGQEVNELKSKIEKLKVELDEARLSEKQLKHQVDHQKELLSCKSEELRVMSERVQESMSSEMLALQIELTEMESMKTTLKEEVNELQYRQEQLELLITNLMRQVDRLKEEKEEREKEAVSYYNALEKARVANQDLQVQLDQALQQALDPNSKGNSLFAEVEDRRAAMERQLISMKVKYQSLKKQNVFNREQMQRMKLQIATLLQMKGSQTEFEQQERLLAMLEQKNGEIKHLLGEIRNLEKFKNLYESMESKPSVDSGALEDNTYYTDLLQMKLDNLNKEIESTKGELSIQRMKALFESQRALDIERKLFANERCLQLSESENMKLRAKLDELKLKYEPEETVEVPVLKKRREVLPVDITTSKDTCVNNSAVGGEVYRLPPQKEETQCCPNSLEDNNLQLEKSVSIHTPIVSLSPHKNLPVDMQLKKEKKCVKLVGVPADAEALSERSGNTLNSPRLAAESKLQTEVKEGKETASKLEKETCKKSHPILYVSSKSTPETQCPQQ</sequence>
<organism>
    <name type="scientific">Macaca fascicularis</name>
    <name type="common">Crab-eating macaque</name>
    <name type="synonym">Cynomolgus monkey</name>
    <dbReference type="NCBI Taxonomy" id="9541"/>
    <lineage>
        <taxon>Eukaryota</taxon>
        <taxon>Metazoa</taxon>
        <taxon>Chordata</taxon>
        <taxon>Craniata</taxon>
        <taxon>Vertebrata</taxon>
        <taxon>Euteleostomi</taxon>
        <taxon>Mammalia</taxon>
        <taxon>Eutheria</taxon>
        <taxon>Euarchontoglires</taxon>
        <taxon>Primates</taxon>
        <taxon>Haplorrhini</taxon>
        <taxon>Catarrhini</taxon>
        <taxon>Cercopithecidae</taxon>
        <taxon>Cercopithecinae</taxon>
        <taxon>Macaca</taxon>
    </lineage>
</organism>
<evidence type="ECO:0000250" key="1">
    <source>
        <dbReference type="UniProtKB" id="Q923A2"/>
    </source>
</evidence>
<evidence type="ECO:0000250" key="2">
    <source>
        <dbReference type="UniProtKB" id="Q96EA4"/>
    </source>
</evidence>
<evidence type="ECO:0000255" key="3">
    <source>
        <dbReference type="HAMAP-Rule" id="MF_03041"/>
    </source>
</evidence>
<evidence type="ECO:0000256" key="4">
    <source>
        <dbReference type="SAM" id="MobiDB-lite"/>
    </source>
</evidence>
<dbReference type="EMBL" id="AB168845">
    <property type="protein sequence ID" value="BAE00949.1"/>
    <property type="molecule type" value="mRNA"/>
</dbReference>
<dbReference type="RefSeq" id="NP_001271899.1">
    <property type="nucleotide sequence ID" value="NM_001284970.1"/>
</dbReference>
<dbReference type="RefSeq" id="XP_005558540.1">
    <property type="nucleotide sequence ID" value="XM_005558483.1"/>
</dbReference>
<dbReference type="RefSeq" id="XP_005558541.1">
    <property type="nucleotide sequence ID" value="XM_005558484.1"/>
</dbReference>
<dbReference type="SMR" id="Q4R7H3"/>
<dbReference type="STRING" id="9541.ENSMFAP00000012897"/>
<dbReference type="GeneID" id="101926343"/>
<dbReference type="KEGG" id="mcf:101926343"/>
<dbReference type="CTD" id="54908"/>
<dbReference type="VEuPathDB" id="HostDB:ENSMFAG00000026820"/>
<dbReference type="eggNOG" id="ENOG502S27G">
    <property type="taxonomic scope" value="Eukaryota"/>
</dbReference>
<dbReference type="OMA" id="KQHAFTK"/>
<dbReference type="Proteomes" id="UP000233100">
    <property type="component" value="Chromosome 6"/>
</dbReference>
<dbReference type="GO" id="GO:0005813">
    <property type="term" value="C:centrosome"/>
    <property type="evidence" value="ECO:0007669"/>
    <property type="project" value="UniProtKB-SubCell"/>
</dbReference>
<dbReference type="GO" id="GO:0005737">
    <property type="term" value="C:cytoplasm"/>
    <property type="evidence" value="ECO:0007669"/>
    <property type="project" value="UniProtKB-KW"/>
</dbReference>
<dbReference type="GO" id="GO:0005634">
    <property type="term" value="C:nucleus"/>
    <property type="evidence" value="ECO:0000250"/>
    <property type="project" value="UniProtKB"/>
</dbReference>
<dbReference type="GO" id="GO:0000940">
    <property type="term" value="C:outer kinetochore"/>
    <property type="evidence" value="ECO:0000250"/>
    <property type="project" value="UniProtKB"/>
</dbReference>
<dbReference type="GO" id="GO:0000922">
    <property type="term" value="C:spindle pole"/>
    <property type="evidence" value="ECO:0000250"/>
    <property type="project" value="UniProtKB"/>
</dbReference>
<dbReference type="GO" id="GO:0043515">
    <property type="term" value="F:kinetochore binding"/>
    <property type="evidence" value="ECO:0000250"/>
    <property type="project" value="UniProtKB"/>
</dbReference>
<dbReference type="GO" id="GO:0051301">
    <property type="term" value="P:cell division"/>
    <property type="evidence" value="ECO:0007669"/>
    <property type="project" value="UniProtKB-KW"/>
</dbReference>
<dbReference type="GO" id="GO:0016477">
    <property type="term" value="P:cell migration"/>
    <property type="evidence" value="ECO:0000250"/>
    <property type="project" value="UniProtKB"/>
</dbReference>
<dbReference type="GO" id="GO:0000132">
    <property type="term" value="P:establishment of mitotic spindle orientation"/>
    <property type="evidence" value="ECO:0000250"/>
    <property type="project" value="UniProtKB"/>
</dbReference>
<dbReference type="GO" id="GO:0007080">
    <property type="term" value="P:mitotic metaphase chromosome alignment"/>
    <property type="evidence" value="ECO:0000250"/>
    <property type="project" value="UniProtKB"/>
</dbReference>
<dbReference type="GO" id="GO:0007094">
    <property type="term" value="P:mitotic spindle assembly checkpoint signaling"/>
    <property type="evidence" value="ECO:0007669"/>
    <property type="project" value="InterPro"/>
</dbReference>
<dbReference type="GO" id="GO:0034501">
    <property type="term" value="P:protein localization to kinetochore"/>
    <property type="evidence" value="ECO:0000250"/>
    <property type="project" value="UniProtKB"/>
</dbReference>
<dbReference type="HAMAP" id="MF_03041">
    <property type="entry name" value="SPDLY"/>
    <property type="match status" value="1"/>
</dbReference>
<dbReference type="InterPro" id="IPR028593">
    <property type="entry name" value="SPDLY_chordates"/>
</dbReference>
<dbReference type="InterPro" id="IPR051149">
    <property type="entry name" value="Spindly/BICDR_Dynein_Adapter"/>
</dbReference>
<dbReference type="PANTHER" id="PTHR32123">
    <property type="entry name" value="BICD FAMILY-LIKE CARGO ADAPTER"/>
    <property type="match status" value="1"/>
</dbReference>
<dbReference type="PANTHER" id="PTHR32123:SF9">
    <property type="entry name" value="PROTEIN SPINDLY"/>
    <property type="match status" value="1"/>
</dbReference>